<proteinExistence type="evidence at protein level"/>
<gene>
    <name type="primary">Slc6a13</name>
    <name type="synonym">Gabt2</name>
    <name type="synonym">Gat-2</name>
</gene>
<dbReference type="EMBL" id="M95762">
    <property type="protein sequence ID" value="AAA40602.1"/>
    <property type="molecule type" value="mRNA"/>
</dbReference>
<dbReference type="PIR" id="A45078">
    <property type="entry name" value="A45078"/>
</dbReference>
<dbReference type="RefSeq" id="NP_598307.1">
    <property type="nucleotide sequence ID" value="NM_133623.1"/>
</dbReference>
<dbReference type="RefSeq" id="XP_006237282.2">
    <property type="nucleotide sequence ID" value="XM_006237220.5"/>
</dbReference>
<dbReference type="RefSeq" id="XP_006237283.2">
    <property type="nucleotide sequence ID" value="XM_006237221.4"/>
</dbReference>
<dbReference type="SMR" id="P31646"/>
<dbReference type="FunCoup" id="P31646">
    <property type="interactions" value="47"/>
</dbReference>
<dbReference type="STRING" id="10116.ENSRNOP00000071638"/>
<dbReference type="BindingDB" id="P31646"/>
<dbReference type="ChEMBL" id="CHEMBL4889"/>
<dbReference type="DrugCentral" id="P31646"/>
<dbReference type="GuidetoPHARMACOLOGY" id="930"/>
<dbReference type="GlyCosmos" id="P31646">
    <property type="glycosylation" value="4 sites, No reported glycans"/>
</dbReference>
<dbReference type="GlyGen" id="P31646">
    <property type="glycosylation" value="4 sites"/>
</dbReference>
<dbReference type="PhosphoSitePlus" id="P31646"/>
<dbReference type="PaxDb" id="10116-ENSRNOP00000018083"/>
<dbReference type="Ensembl" id="ENSRNOT00000018083.4">
    <property type="protein sequence ID" value="ENSRNOP00000018083.3"/>
    <property type="gene ID" value="ENSRNOG00000012876.6"/>
</dbReference>
<dbReference type="GeneID" id="171163"/>
<dbReference type="KEGG" id="rno:171163"/>
<dbReference type="UCSC" id="RGD:620788">
    <property type="organism name" value="rat"/>
</dbReference>
<dbReference type="AGR" id="RGD:620788"/>
<dbReference type="CTD" id="6540"/>
<dbReference type="RGD" id="620788">
    <property type="gene designation" value="Slc6a13"/>
</dbReference>
<dbReference type="eggNOG" id="KOG3660">
    <property type="taxonomic scope" value="Eukaryota"/>
</dbReference>
<dbReference type="InParanoid" id="P31646"/>
<dbReference type="OMA" id="FTPAVCM"/>
<dbReference type="OrthoDB" id="6581954at2759"/>
<dbReference type="PhylomeDB" id="P31646"/>
<dbReference type="TreeFam" id="TF343812"/>
<dbReference type="Reactome" id="R-RNO-442660">
    <property type="pathway name" value="Na+/Cl- dependent neurotransmitter transporters"/>
</dbReference>
<dbReference type="Reactome" id="R-RNO-888593">
    <property type="pathway name" value="Reuptake of GABA"/>
</dbReference>
<dbReference type="PRO" id="PR:P31646"/>
<dbReference type="Proteomes" id="UP000002494">
    <property type="component" value="Chromosome 4"/>
</dbReference>
<dbReference type="GO" id="GO:0016323">
    <property type="term" value="C:basolateral plasma membrane"/>
    <property type="evidence" value="ECO:0000266"/>
    <property type="project" value="RGD"/>
</dbReference>
<dbReference type="GO" id="GO:0042995">
    <property type="term" value="C:cell projection"/>
    <property type="evidence" value="ECO:0000318"/>
    <property type="project" value="GO_Central"/>
</dbReference>
<dbReference type="GO" id="GO:0005886">
    <property type="term" value="C:plasma membrane"/>
    <property type="evidence" value="ECO:0000314"/>
    <property type="project" value="ARUK-UCL"/>
</dbReference>
<dbReference type="GO" id="GO:0016597">
    <property type="term" value="F:amino acid binding"/>
    <property type="evidence" value="ECO:0000314"/>
    <property type="project" value="RGD"/>
</dbReference>
<dbReference type="GO" id="GO:0015171">
    <property type="term" value="F:amino acid transmembrane transporter activity"/>
    <property type="evidence" value="ECO:0000266"/>
    <property type="project" value="RGD"/>
</dbReference>
<dbReference type="GO" id="GO:0005283">
    <property type="term" value="F:amino acid:sodium symporter activity"/>
    <property type="evidence" value="ECO:0000266"/>
    <property type="project" value="RGD"/>
</dbReference>
<dbReference type="GO" id="GO:0005308">
    <property type="term" value="F:creatine transmembrane transporter activity"/>
    <property type="evidence" value="ECO:0000314"/>
    <property type="project" value="ARUK-UCL"/>
</dbReference>
<dbReference type="GO" id="GO:0015185">
    <property type="term" value="F:gamma-aminobutyric acid transmembrane transporter activity"/>
    <property type="evidence" value="ECO:0000314"/>
    <property type="project" value="ARUK-UCL"/>
</dbReference>
<dbReference type="GO" id="GO:0005332">
    <property type="term" value="F:gamma-aminobutyric acid:sodium:chloride symporter activity"/>
    <property type="evidence" value="ECO:0000314"/>
    <property type="project" value="UniProtKB"/>
</dbReference>
<dbReference type="GO" id="GO:0008028">
    <property type="term" value="F:monocarboxylic acid transmembrane transporter activity"/>
    <property type="evidence" value="ECO:0000266"/>
    <property type="project" value="RGD"/>
</dbReference>
<dbReference type="GO" id="GO:0005368">
    <property type="term" value="F:taurine transmembrane transporter activity"/>
    <property type="evidence" value="ECO:0000315"/>
    <property type="project" value="ARUK-UCL"/>
</dbReference>
<dbReference type="GO" id="GO:0005369">
    <property type="term" value="F:taurine:sodium symporter activity"/>
    <property type="evidence" value="ECO:0000314"/>
    <property type="project" value="UniProtKB"/>
</dbReference>
<dbReference type="GO" id="GO:0089718">
    <property type="term" value="P:amino acid import across plasma membrane"/>
    <property type="evidence" value="ECO:0000266"/>
    <property type="project" value="RGD"/>
</dbReference>
<dbReference type="GO" id="GO:0006865">
    <property type="term" value="P:amino acid transport"/>
    <property type="evidence" value="ECO:0000318"/>
    <property type="project" value="GO_Central"/>
</dbReference>
<dbReference type="GO" id="GO:0015881">
    <property type="term" value="P:creatine transmembrane transport"/>
    <property type="evidence" value="ECO:0000314"/>
    <property type="project" value="ARUK-UCL"/>
</dbReference>
<dbReference type="GO" id="GO:0051939">
    <property type="term" value="P:gamma-aminobutyric acid import"/>
    <property type="evidence" value="ECO:0000314"/>
    <property type="project" value="ARUK-UCL"/>
</dbReference>
<dbReference type="GO" id="GO:0015718">
    <property type="term" value="P:monocarboxylic acid transport"/>
    <property type="evidence" value="ECO:0000266"/>
    <property type="project" value="RGD"/>
</dbReference>
<dbReference type="GO" id="GO:0006836">
    <property type="term" value="P:neurotransmitter transport"/>
    <property type="evidence" value="ECO:0000314"/>
    <property type="project" value="RGD"/>
</dbReference>
<dbReference type="GO" id="GO:0071705">
    <property type="term" value="P:nitrogen compound transport"/>
    <property type="evidence" value="ECO:0000314"/>
    <property type="project" value="ARUK-UCL"/>
</dbReference>
<dbReference type="GO" id="GO:0035725">
    <property type="term" value="P:sodium ion transmembrane transport"/>
    <property type="evidence" value="ECO:0000318"/>
    <property type="project" value="GO_Central"/>
</dbReference>
<dbReference type="GO" id="GO:0015734">
    <property type="term" value="P:taurine transmembrane transport"/>
    <property type="evidence" value="ECO:0000315"/>
    <property type="project" value="ARUK-UCL"/>
</dbReference>
<dbReference type="InterPro" id="IPR000175">
    <property type="entry name" value="Na/ntran_symport"/>
</dbReference>
<dbReference type="InterPro" id="IPR002981">
    <property type="entry name" value="Na/ntran_symport_GABA_GAT2"/>
</dbReference>
<dbReference type="InterPro" id="IPR037272">
    <property type="entry name" value="SNS_sf"/>
</dbReference>
<dbReference type="NCBIfam" id="NF037979">
    <property type="entry name" value="Na_transp"/>
    <property type="match status" value="1"/>
</dbReference>
<dbReference type="PANTHER" id="PTHR11616:SF111">
    <property type="entry name" value="SODIUM- AND CHLORIDE-DEPENDENT GABA TRANSPORTER 2"/>
    <property type="match status" value="1"/>
</dbReference>
<dbReference type="PANTHER" id="PTHR11616">
    <property type="entry name" value="SODIUM/CHLORIDE DEPENDENT TRANSPORTER"/>
    <property type="match status" value="1"/>
</dbReference>
<dbReference type="Pfam" id="PF00209">
    <property type="entry name" value="SNF"/>
    <property type="match status" value="1"/>
</dbReference>
<dbReference type="PRINTS" id="PR01196">
    <property type="entry name" value="GAT2TRNSPORT"/>
</dbReference>
<dbReference type="PRINTS" id="PR00176">
    <property type="entry name" value="NANEUSMPORT"/>
</dbReference>
<dbReference type="SUPFAM" id="SSF161070">
    <property type="entry name" value="SNF-like"/>
    <property type="match status" value="1"/>
</dbReference>
<dbReference type="PROSITE" id="PS00610">
    <property type="entry name" value="NA_NEUROTRAN_SYMP_1"/>
    <property type="match status" value="1"/>
</dbReference>
<dbReference type="PROSITE" id="PS00754">
    <property type="entry name" value="NA_NEUROTRAN_SYMP_2"/>
    <property type="match status" value="1"/>
</dbReference>
<dbReference type="PROSITE" id="PS50267">
    <property type="entry name" value="NA_NEUROTRAN_SYMP_3"/>
    <property type="match status" value="1"/>
</dbReference>
<comment type="function">
    <text evidence="1 4 5">Mediates sodium- and chloride-dependent transport of gamma-aminobutyric acid (GABA) (PubMed:1400419, PubMed:22896705). Mediates transport of taurine and is the major taurine transporter in hepatocytes (PubMed:22896705). Can also mediate transport of beta-alanine and hypotaurine (By similarity).</text>
</comment>
<comment type="catalytic activity">
    <reaction evidence="4 5">
        <text>4-aminobutanoate(out) + chloride(out) + 2 Na(+)(out) = 4-aminobutanoate(in) + chloride(in) + 2 Na(+)(in)</text>
        <dbReference type="Rhea" id="RHEA:70687"/>
        <dbReference type="ChEBI" id="CHEBI:17996"/>
        <dbReference type="ChEBI" id="CHEBI:29101"/>
        <dbReference type="ChEBI" id="CHEBI:59888"/>
    </reaction>
    <physiologicalReaction direction="left-to-right" evidence="7">
        <dbReference type="Rhea" id="RHEA:70688"/>
    </physiologicalReaction>
</comment>
<comment type="catalytic activity">
    <reaction evidence="5">
        <text>taurine(out) + chloride(out) + 2 Na(+)(out) = taurine(in) + chloride(in) + 2 Na(+)(in)</text>
        <dbReference type="Rhea" id="RHEA:71223"/>
        <dbReference type="ChEBI" id="CHEBI:17996"/>
        <dbReference type="ChEBI" id="CHEBI:29101"/>
        <dbReference type="ChEBI" id="CHEBI:507393"/>
    </reaction>
    <physiologicalReaction direction="left-to-right" evidence="8">
        <dbReference type="Rhea" id="RHEA:71224"/>
    </physiologicalReaction>
</comment>
<comment type="catalytic activity">
    <reaction evidence="1">
        <text>beta-alanine(out) + chloride(out) + 2 Na(+)(out) = beta-alanine(in) + chloride(in) + 2 Na(+)(in)</text>
        <dbReference type="Rhea" id="RHEA:71247"/>
        <dbReference type="ChEBI" id="CHEBI:17996"/>
        <dbReference type="ChEBI" id="CHEBI:29101"/>
        <dbReference type="ChEBI" id="CHEBI:57966"/>
    </reaction>
    <physiologicalReaction direction="left-to-right" evidence="1">
        <dbReference type="Rhea" id="RHEA:71248"/>
    </physiologicalReaction>
</comment>
<comment type="catalytic activity">
    <reaction evidence="1">
        <text>hypotaurine(out) + chloride(out) + 2 Na(+)(out) = hypotaurine(in) + chloride(in) + 2 Na(+)(in)</text>
        <dbReference type="Rhea" id="RHEA:71243"/>
        <dbReference type="ChEBI" id="CHEBI:17996"/>
        <dbReference type="ChEBI" id="CHEBI:29101"/>
        <dbReference type="ChEBI" id="CHEBI:57853"/>
    </reaction>
    <physiologicalReaction direction="left-to-right" evidence="1">
        <dbReference type="Rhea" id="RHEA:71244"/>
    </physiologicalReaction>
</comment>
<comment type="activity regulation">
    <text evidence="4 5">GABA transport is inhibited by beta-alanine, L-2,4-Diaminobutyric acid, hypotaurine and nipecotic acid (PubMed:1400419, PubMed:22896705). Taurine transport is inhibited by hypotaurine, beta-alanine and nipecotic acid (PubMed:22896705).</text>
</comment>
<comment type="biophysicochemical properties">
    <kinetics>
        <KM evidence="4">8 uM for GABA</KM>
        <Vmax evidence="4">2.5 nmol/min/mg enzyme for GABA</Vmax>
    </kinetics>
</comment>
<comment type="subcellular location">
    <subcellularLocation>
        <location evidence="5">Cell membrane</location>
        <topology evidence="3">Multi-pass membrane protein</topology>
    </subcellularLocation>
    <subcellularLocation>
        <location evidence="1">Basolateral cell membrane</location>
        <topology evidence="3">Multi-pass membrane protein</topology>
    </subcellularLocation>
</comment>
<comment type="tissue specificity">
    <text evidence="4 5">Brain, retina, and peripheral tissues. Expressed in hepatocytes (at protein level).</text>
</comment>
<comment type="similarity">
    <text evidence="6">Belongs to the sodium:neurotransmitter symporter (SNF) (TC 2.A.22) family. SLC6A13 subfamily.</text>
</comment>
<sequence>MDNRVSGTTSNGETKPVCPVMEKVEEDGTLEREQWTNKMEFVLSVAGEIIGLGNVWRFPYLCYKNGGGAFFIPYLIFLFTCGIPVFFLETALGQYTNQGGITAWRKICPIFEGIGYASQMIVSLLNVYYIVVLAWALFYLFSSFTTDLPWGSCSHEWNTENCVEFQKTNNSLNVTSENATSPVIEFWERRVLKISDGIQHLGSLRWELVLCLLLAWIICYFCIWKGVKSTGKVVYFTATFPYLMLVVLLIRGVTLPGAAQGIQFYLYPNITRLWDPQVWMDAGTQIFFSFAICLGCLTALGSYNKYHNNCYRDCVALCILNSSTSFVAGFAIFSILGFMSQEQGVPISEVAESGPGLAFIAYPRAVVMLPFSPLWACCFFFMVVLLGLDSQFVCVESLVTALVDMYPRVFRKKNRREILILIVSVVSFFIGLIMLTEGGMYVFQLFDYYAASGMCLLFVAIFESLCVAWVYGASRFYDNIEDMIGYKPWPLIKYCWLFFTPAVCLATFLFSLIKYTPLTYNKKYTYPWWGDALGWLLALSSMVCIPAWSIYKLRTLKGPLRERLRQLVCPAEDLPQKSQPELTSPATPMTSLLRLTELESNC</sequence>
<name>S6A13_RAT</name>
<accession>P31646</accession>
<organism>
    <name type="scientific">Rattus norvegicus</name>
    <name type="common">Rat</name>
    <dbReference type="NCBI Taxonomy" id="10116"/>
    <lineage>
        <taxon>Eukaryota</taxon>
        <taxon>Metazoa</taxon>
        <taxon>Chordata</taxon>
        <taxon>Craniata</taxon>
        <taxon>Vertebrata</taxon>
        <taxon>Euteleostomi</taxon>
        <taxon>Mammalia</taxon>
        <taxon>Eutheria</taxon>
        <taxon>Euarchontoglires</taxon>
        <taxon>Glires</taxon>
        <taxon>Rodentia</taxon>
        <taxon>Myomorpha</taxon>
        <taxon>Muroidea</taxon>
        <taxon>Muridae</taxon>
        <taxon>Murinae</taxon>
        <taxon>Rattus</taxon>
    </lineage>
</organism>
<keyword id="KW-1003">Cell membrane</keyword>
<keyword id="KW-1015">Disulfide bond</keyword>
<keyword id="KW-0325">Glycoprotein</keyword>
<keyword id="KW-0472">Membrane</keyword>
<keyword id="KW-0532">Neurotransmitter transport</keyword>
<keyword id="KW-0597">Phosphoprotein</keyword>
<keyword id="KW-1185">Reference proteome</keyword>
<keyword id="KW-0769">Symport</keyword>
<keyword id="KW-0812">Transmembrane</keyword>
<keyword id="KW-1133">Transmembrane helix</keyword>
<keyword id="KW-0813">Transport</keyword>
<feature type="chain" id="PRO_0000214794" description="Sodium- and chloride-dependent GABA transporter 2">
    <location>
        <begin position="1"/>
        <end position="602"/>
    </location>
</feature>
<feature type="topological domain" description="Cytoplasmic" evidence="3">
    <location>
        <begin position="1"/>
        <end position="40"/>
    </location>
</feature>
<feature type="transmembrane region" description="Helical; Name=1" evidence="3">
    <location>
        <begin position="41"/>
        <end position="61"/>
    </location>
</feature>
<feature type="transmembrane region" description="Helical; Name=2" evidence="3">
    <location>
        <begin position="68"/>
        <end position="88"/>
    </location>
</feature>
<feature type="transmembrane region" description="Helical; Name=3" evidence="3">
    <location>
        <begin position="121"/>
        <end position="141"/>
    </location>
</feature>
<feature type="topological domain" description="Extracellular" evidence="3">
    <location>
        <begin position="142"/>
        <end position="206"/>
    </location>
</feature>
<feature type="transmembrane region" description="Helical; Name=4" evidence="3">
    <location>
        <begin position="207"/>
        <end position="227"/>
    </location>
</feature>
<feature type="transmembrane region" description="Helical; Name=5" evidence="3">
    <location>
        <begin position="233"/>
        <end position="253"/>
    </location>
</feature>
<feature type="transmembrane region" description="Helical; Name=6" evidence="3">
    <location>
        <begin position="282"/>
        <end position="302"/>
    </location>
</feature>
<feature type="transmembrane region" description="Helical; Name=7" evidence="3">
    <location>
        <begin position="319"/>
        <end position="339"/>
    </location>
</feature>
<feature type="transmembrane region" description="Helical; Name=8" evidence="3">
    <location>
        <begin position="366"/>
        <end position="386"/>
    </location>
</feature>
<feature type="transmembrane region" description="Helical; Name=9" evidence="3">
    <location>
        <begin position="418"/>
        <end position="438"/>
    </location>
</feature>
<feature type="transmembrane region" description="Helical; Name=10" evidence="3">
    <location>
        <begin position="453"/>
        <end position="473"/>
    </location>
</feature>
<feature type="transmembrane region" description="Helical; Name=11" evidence="3">
    <location>
        <begin position="490"/>
        <end position="510"/>
    </location>
</feature>
<feature type="transmembrane region" description="Helical; Name=12" evidence="3">
    <location>
        <begin position="528"/>
        <end position="548"/>
    </location>
</feature>
<feature type="topological domain" description="Cytoplasmic" evidence="3">
    <location>
        <begin position="549"/>
        <end position="602"/>
    </location>
</feature>
<feature type="modified residue" description="Phosphothreonine" evidence="1">
    <location>
        <position position="587"/>
    </location>
</feature>
<feature type="modified residue" description="Phosphoserine" evidence="1">
    <location>
        <position position="591"/>
    </location>
</feature>
<feature type="glycosylation site" description="N-linked (GlcNAc...) asparagine" evidence="3">
    <location>
        <position position="169"/>
    </location>
</feature>
<feature type="glycosylation site" description="N-linked (GlcNAc...) asparagine" evidence="3">
    <location>
        <position position="173"/>
    </location>
</feature>
<feature type="glycosylation site" description="N-linked (GlcNAc...) asparagine" evidence="3">
    <location>
        <position position="178"/>
    </location>
</feature>
<feature type="glycosylation site" description="N-linked (GlcNAc...) asparagine" evidence="3">
    <location>
        <position position="269"/>
    </location>
</feature>
<feature type="disulfide bond" evidence="2">
    <location>
        <begin position="153"/>
        <end position="162"/>
    </location>
</feature>
<evidence type="ECO:0000250" key="1">
    <source>
        <dbReference type="UniProtKB" id="P31649"/>
    </source>
</evidence>
<evidence type="ECO:0000250" key="2">
    <source>
        <dbReference type="UniProtKB" id="Q7K4Y6"/>
    </source>
</evidence>
<evidence type="ECO:0000255" key="3"/>
<evidence type="ECO:0000269" key="4">
    <source>
    </source>
</evidence>
<evidence type="ECO:0000269" key="5">
    <source>
    </source>
</evidence>
<evidence type="ECO:0000305" key="6"/>
<evidence type="ECO:0000305" key="7">
    <source>
    </source>
</evidence>
<evidence type="ECO:0000305" key="8">
    <source>
    </source>
</evidence>
<protein>
    <recommendedName>
        <fullName>Sodium- and chloride-dependent GABA transporter 2</fullName>
        <shortName>GAT-2</shortName>
    </recommendedName>
    <alternativeName>
        <fullName>Solute carrier family 6 member 13</fullName>
    </alternativeName>
</protein>
<reference key="1">
    <citation type="journal article" date="1992" name="J. Biol. Chem.">
        <title>Molecular heterogeneity of the gamma-aminobutyric acid (GABA) transport system. Cloning of two novel high affinity GABA transporters from rat brain.</title>
        <authorList>
            <person name="Borden L.A."/>
            <person name="Smith K.E."/>
            <person name="Hartig P.R."/>
            <person name="Branchek T.A."/>
            <person name="Weinshank R.L."/>
        </authorList>
    </citation>
    <scope>NUCLEOTIDE SEQUENCE [MRNA]</scope>
    <scope>FUNCTION</scope>
    <scope>TRANSPORTER ACTIVITY</scope>
    <scope>TISSUE SPECIFICITY</scope>
    <scope>BIOPHYSICOCHEMICAL PROPERTIES</scope>
    <scope>ACTIVITY REGULATION</scope>
    <source>
        <strain>Sprague-Dawley</strain>
        <tissue>Brain</tissue>
    </source>
</reference>
<reference key="2">
    <citation type="journal article" date="2012" name="J. Biol. Chem.">
        <title>Deletion of the gamma-aminobutyric acid transporter 2 (GAT2 and SLC6A13) gene in mice leads to changes in liver and brain taurine contents.</title>
        <authorList>
            <person name="Zhou Y."/>
            <person name="Holmseth S."/>
            <person name="Guo C."/>
            <person name="Hassel B."/>
            <person name="Hofner G."/>
            <person name="Huitfeldt H.S."/>
            <person name="Wanner K.T."/>
            <person name="Danbolt N.C."/>
        </authorList>
    </citation>
    <scope>FUNCTION</scope>
    <scope>SUBCELLULAR LOCATION</scope>
    <scope>TISSUE SPECIFICITY</scope>
    <scope>TRANSPORTER ACTIVITY</scope>
    <scope>ACTIVITY REGULATION</scope>
</reference>